<comment type="function">
    <text evidence="1">Catalyzes the synthesis of beta-nicotinate D-ribonucleotide from nicotinate and 5-phospho-D-ribose 1-phosphate at the expense of ATP.</text>
</comment>
<comment type="catalytic activity">
    <reaction evidence="1">
        <text>nicotinate + 5-phospho-alpha-D-ribose 1-diphosphate + ATP + H2O = nicotinate beta-D-ribonucleotide + ADP + phosphate + diphosphate</text>
        <dbReference type="Rhea" id="RHEA:36163"/>
        <dbReference type="ChEBI" id="CHEBI:15377"/>
        <dbReference type="ChEBI" id="CHEBI:30616"/>
        <dbReference type="ChEBI" id="CHEBI:32544"/>
        <dbReference type="ChEBI" id="CHEBI:33019"/>
        <dbReference type="ChEBI" id="CHEBI:43474"/>
        <dbReference type="ChEBI" id="CHEBI:57502"/>
        <dbReference type="ChEBI" id="CHEBI:58017"/>
        <dbReference type="ChEBI" id="CHEBI:456216"/>
        <dbReference type="EC" id="6.3.4.21"/>
    </reaction>
</comment>
<comment type="pathway">
    <text evidence="1">Cofactor biosynthesis; NAD(+) biosynthesis; nicotinate D-ribonucleotide from nicotinate: step 1/1.</text>
</comment>
<comment type="PTM">
    <text evidence="1">Transiently phosphorylated on a His residue during the reaction cycle. Phosphorylation strongly increases the affinity for substrates and increases the rate of nicotinate D-ribonucleotide production. Dephosphorylation regenerates the low-affinity form of the enzyme, leading to product release.</text>
</comment>
<comment type="similarity">
    <text evidence="1">Belongs to the NAPRTase family.</text>
</comment>
<keyword id="KW-0436">Ligase</keyword>
<keyword id="KW-0597">Phosphoprotein</keyword>
<keyword id="KW-0662">Pyridine nucleotide biosynthesis</keyword>
<keyword id="KW-1185">Reference proteome</keyword>
<reference key="1">
    <citation type="journal article" date="2010" name="Stand. Genomic Sci.">
        <title>Complete genome sequence of Rhizobium leguminosarum bv trifolii strain WSM2304, an effective microsymbiont of the South American clover Trifolium polymorphum.</title>
        <authorList>
            <person name="Reeve W."/>
            <person name="O'Hara G."/>
            <person name="Chain P."/>
            <person name="Ardley J."/>
            <person name="Brau L."/>
            <person name="Nandesena K."/>
            <person name="Tiwari R."/>
            <person name="Malfatti S."/>
            <person name="Kiss H."/>
            <person name="Lapidus A."/>
            <person name="Copeland A."/>
            <person name="Nolan M."/>
            <person name="Land M."/>
            <person name="Ivanova N."/>
            <person name="Mavromatis K."/>
            <person name="Markowitz V."/>
            <person name="Kyrpides N."/>
            <person name="Melino V."/>
            <person name="Denton M."/>
            <person name="Yates R."/>
            <person name="Howieson J."/>
        </authorList>
    </citation>
    <scope>NUCLEOTIDE SEQUENCE [LARGE SCALE GENOMIC DNA]</scope>
    <source>
        <strain>WSM2304</strain>
    </source>
</reference>
<name>PNCB_RHILW</name>
<evidence type="ECO:0000255" key="1">
    <source>
        <dbReference type="HAMAP-Rule" id="MF_00570"/>
    </source>
</evidence>
<organism>
    <name type="scientific">Rhizobium leguminosarum bv. trifolii (strain WSM2304)</name>
    <dbReference type="NCBI Taxonomy" id="395492"/>
    <lineage>
        <taxon>Bacteria</taxon>
        <taxon>Pseudomonadati</taxon>
        <taxon>Pseudomonadota</taxon>
        <taxon>Alphaproteobacteria</taxon>
        <taxon>Hyphomicrobiales</taxon>
        <taxon>Rhizobiaceae</taxon>
        <taxon>Rhizobium/Agrobacterium group</taxon>
        <taxon>Rhizobium</taxon>
    </lineage>
</organism>
<feature type="chain" id="PRO_1000129481" description="Nicotinate phosphoribosyltransferase">
    <location>
        <begin position="1"/>
        <end position="434"/>
    </location>
</feature>
<feature type="modified residue" description="Phosphohistidine; by autocatalysis" evidence="1">
    <location>
        <position position="242"/>
    </location>
</feature>
<sequence length="434" mass="49509">MARTDIARRVYNHAWKLDPIIRSLIDTDFYKLLMLQMIWKLYPDVNASFTLINRTKRVRLADEIDEGELREQLDHARTLKLSKKEMIWLAGNSFYGRAQIFEPEFLAWLSNFQLPEYELSKKDGQYVLDFHGSWKETTMWEIPALAIVNELRSRSAMRALGPFTLDVLYARAKAKMWSKVERLKELPGLRISDFGTRRRHSFLWQRWCVEALKEGIGPAFTGTSNVLLAMDSDLEAVGTNAHELPMVAAALAQTDEQLRNAPYKILRDWNKLYGGNLLIVLPDAFGTAAFLRDAPEWVADWTGFRPDSAPPIEGGEKIIDWWKKMGRDPRQKLLIFSDGLDVDAIIDTYRHFEGRVRMSFGWGTNLTNDFSGCAPTEISGLNPISVVCKVSDADGRPAVKLSDNPQKATGDPAEVERYLKFFGAEDRIDQTVLV</sequence>
<dbReference type="EC" id="6.3.4.21" evidence="1"/>
<dbReference type="EMBL" id="CP001191">
    <property type="protein sequence ID" value="ACI57400.1"/>
    <property type="molecule type" value="Genomic_DNA"/>
</dbReference>
<dbReference type="RefSeq" id="WP_003589251.1">
    <property type="nucleotide sequence ID" value="NC_011369.1"/>
</dbReference>
<dbReference type="SMR" id="B5ZWU4"/>
<dbReference type="STRING" id="395492.Rleg2_4138"/>
<dbReference type="KEGG" id="rlt:Rleg2_4138"/>
<dbReference type="eggNOG" id="COG1488">
    <property type="taxonomic scope" value="Bacteria"/>
</dbReference>
<dbReference type="HOGENOM" id="CLU_030991_1_0_5"/>
<dbReference type="UniPathway" id="UPA00253">
    <property type="reaction ID" value="UER00457"/>
</dbReference>
<dbReference type="Proteomes" id="UP000008330">
    <property type="component" value="Chromosome"/>
</dbReference>
<dbReference type="GO" id="GO:0005829">
    <property type="term" value="C:cytosol"/>
    <property type="evidence" value="ECO:0007669"/>
    <property type="project" value="TreeGrafter"/>
</dbReference>
<dbReference type="GO" id="GO:0004516">
    <property type="term" value="F:nicotinate phosphoribosyltransferase activity"/>
    <property type="evidence" value="ECO:0007669"/>
    <property type="project" value="UniProtKB-UniRule"/>
</dbReference>
<dbReference type="GO" id="GO:0034355">
    <property type="term" value="P:NAD biosynthetic process via the salvage pathway"/>
    <property type="evidence" value="ECO:0007669"/>
    <property type="project" value="TreeGrafter"/>
</dbReference>
<dbReference type="Gene3D" id="3.20.140.10">
    <property type="entry name" value="nicotinate phosphoribosyltransferase"/>
    <property type="match status" value="1"/>
</dbReference>
<dbReference type="HAMAP" id="MF_00570">
    <property type="entry name" value="NAPRTase"/>
    <property type="match status" value="1"/>
</dbReference>
<dbReference type="InterPro" id="IPR041525">
    <property type="entry name" value="N/Namide_PRibTrfase"/>
</dbReference>
<dbReference type="InterPro" id="IPR040727">
    <property type="entry name" value="NAPRTase_N"/>
</dbReference>
<dbReference type="InterPro" id="IPR006406">
    <property type="entry name" value="Nic_PRibTrfase"/>
</dbReference>
<dbReference type="InterPro" id="IPR007229">
    <property type="entry name" value="Nic_PRibTrfase-Fam"/>
</dbReference>
<dbReference type="InterPro" id="IPR036068">
    <property type="entry name" value="Nicotinate_pribotase-like_C"/>
</dbReference>
<dbReference type="NCBIfam" id="TIGR01514">
    <property type="entry name" value="NAPRTase"/>
    <property type="match status" value="1"/>
</dbReference>
<dbReference type="NCBIfam" id="NF003704">
    <property type="entry name" value="PRK05321.1"/>
    <property type="match status" value="1"/>
</dbReference>
<dbReference type="PANTHER" id="PTHR11098">
    <property type="entry name" value="NICOTINATE PHOSPHORIBOSYLTRANSFERASE"/>
    <property type="match status" value="1"/>
</dbReference>
<dbReference type="PANTHER" id="PTHR11098:SF1">
    <property type="entry name" value="NICOTINATE PHOSPHORIBOSYLTRANSFERASE"/>
    <property type="match status" value="1"/>
</dbReference>
<dbReference type="Pfam" id="PF04095">
    <property type="entry name" value="NAPRTase"/>
    <property type="match status" value="1"/>
</dbReference>
<dbReference type="Pfam" id="PF17767">
    <property type="entry name" value="NAPRTase_N"/>
    <property type="match status" value="1"/>
</dbReference>
<dbReference type="PIRSF" id="PIRSF000484">
    <property type="entry name" value="NAPRT"/>
    <property type="match status" value="1"/>
</dbReference>
<dbReference type="SUPFAM" id="SSF51690">
    <property type="entry name" value="Nicotinate/Quinolinate PRTase C-terminal domain-like"/>
    <property type="match status" value="1"/>
</dbReference>
<dbReference type="SUPFAM" id="SSF54675">
    <property type="entry name" value="Nicotinate/Quinolinate PRTase N-terminal domain-like"/>
    <property type="match status" value="1"/>
</dbReference>
<gene>
    <name evidence="1" type="primary">pncB</name>
    <name type="ordered locus">Rleg2_4138</name>
</gene>
<proteinExistence type="inferred from homology"/>
<accession>B5ZWU4</accession>
<protein>
    <recommendedName>
        <fullName evidence="1">Nicotinate phosphoribosyltransferase</fullName>
        <shortName evidence="1">NAPRTase</shortName>
        <ecNumber evidence="1">6.3.4.21</ecNumber>
    </recommendedName>
</protein>